<evidence type="ECO:0000250" key="1">
    <source>
        <dbReference type="UniProtKB" id="P9WQ47"/>
    </source>
</evidence>
<evidence type="ECO:0000255" key="2"/>
<evidence type="ECO:0000305" key="3"/>
<dbReference type="EC" id="6.2.1.57" evidence="1"/>
<dbReference type="EMBL" id="LT708304">
    <property type="protein sequence ID" value="SIU02485.1"/>
    <property type="molecule type" value="Genomic_DNA"/>
</dbReference>
<dbReference type="RefSeq" id="NP_857493.1">
    <property type="nucleotide sequence ID" value="NC_002945.3"/>
</dbReference>
<dbReference type="RefSeq" id="WP_003899713.1">
    <property type="nucleotide sequence ID" value="NC_002945.4"/>
</dbReference>
<dbReference type="SMR" id="Q7TVK7"/>
<dbReference type="KEGG" id="mbo:BQ2027_MB3856"/>
<dbReference type="PATRIC" id="fig|233413.5.peg.4218"/>
<dbReference type="UniPathway" id="UPA00094"/>
<dbReference type="Proteomes" id="UP000001419">
    <property type="component" value="Chromosome"/>
</dbReference>
<dbReference type="GO" id="GO:0005886">
    <property type="term" value="C:plasma membrane"/>
    <property type="evidence" value="ECO:0007669"/>
    <property type="project" value="TreeGrafter"/>
</dbReference>
<dbReference type="GO" id="GO:0070566">
    <property type="term" value="F:adenylyltransferase activity"/>
    <property type="evidence" value="ECO:0007669"/>
    <property type="project" value="TreeGrafter"/>
</dbReference>
<dbReference type="GO" id="GO:0005524">
    <property type="term" value="F:ATP binding"/>
    <property type="evidence" value="ECO:0007669"/>
    <property type="project" value="UniProtKB-KW"/>
</dbReference>
<dbReference type="GO" id="GO:0016874">
    <property type="term" value="F:ligase activity"/>
    <property type="evidence" value="ECO:0007669"/>
    <property type="project" value="UniProtKB-KW"/>
</dbReference>
<dbReference type="GO" id="GO:0071766">
    <property type="term" value="P:Actinobacterium-type cell wall biogenesis"/>
    <property type="evidence" value="ECO:0000250"/>
    <property type="project" value="UniProtKB"/>
</dbReference>
<dbReference type="GO" id="GO:0006633">
    <property type="term" value="P:fatty acid biosynthetic process"/>
    <property type="evidence" value="ECO:0007669"/>
    <property type="project" value="UniProtKB-UniPathway"/>
</dbReference>
<dbReference type="CDD" id="cd05931">
    <property type="entry name" value="FAAL"/>
    <property type="match status" value="1"/>
</dbReference>
<dbReference type="FunFam" id="3.30.300.30:FF:000016">
    <property type="entry name" value="Fatty-acid-CoA ligase FadD26"/>
    <property type="match status" value="1"/>
</dbReference>
<dbReference type="FunFam" id="3.40.50.12780:FF:000013">
    <property type="entry name" value="Long-chain-fatty-acid--AMP ligase FadD32"/>
    <property type="match status" value="1"/>
</dbReference>
<dbReference type="Gene3D" id="3.30.300.30">
    <property type="match status" value="1"/>
</dbReference>
<dbReference type="Gene3D" id="3.40.50.12780">
    <property type="entry name" value="N-terminal domain of ligase-like"/>
    <property type="match status" value="1"/>
</dbReference>
<dbReference type="InterPro" id="IPR025110">
    <property type="entry name" value="AMP-bd_C"/>
</dbReference>
<dbReference type="InterPro" id="IPR045851">
    <property type="entry name" value="AMP-bd_C_sf"/>
</dbReference>
<dbReference type="InterPro" id="IPR000873">
    <property type="entry name" value="AMP-dep_synth/lig_dom"/>
</dbReference>
<dbReference type="InterPro" id="IPR042099">
    <property type="entry name" value="ANL_N_sf"/>
</dbReference>
<dbReference type="InterPro" id="IPR040097">
    <property type="entry name" value="FAAL/FAAC"/>
</dbReference>
<dbReference type="NCBIfam" id="NF004509">
    <property type="entry name" value="PRK05850.1"/>
    <property type="match status" value="1"/>
</dbReference>
<dbReference type="PANTHER" id="PTHR22754:SF32">
    <property type="entry name" value="DISCO-INTERACTING PROTEIN 2"/>
    <property type="match status" value="1"/>
</dbReference>
<dbReference type="PANTHER" id="PTHR22754">
    <property type="entry name" value="DISCO-INTERACTING PROTEIN 2 DIP2 -RELATED"/>
    <property type="match status" value="1"/>
</dbReference>
<dbReference type="Pfam" id="PF00501">
    <property type="entry name" value="AMP-binding"/>
    <property type="match status" value="1"/>
</dbReference>
<dbReference type="Pfam" id="PF23024">
    <property type="entry name" value="AMP-dom_DIP2-like"/>
    <property type="match status" value="1"/>
</dbReference>
<dbReference type="SUPFAM" id="SSF56801">
    <property type="entry name" value="Acetyl-CoA synthetase-like"/>
    <property type="match status" value="1"/>
</dbReference>
<sequence length="584" mass="62841">MVSLSIPSMLRQCVNLHPDGTAFTYIDYERDSEGISESLTWSQVYRRTLNVAAEVRRHAAIGDRAVILAPQGLDYIVAFLGALQAGLIAVPLSAPLGGASDERVDAVVRDAKPNVVLTTSAIMGDVVPRVTPPPGIASPPTVAVDQLDLDSPIRSNIVDDSLQTTAYLQYTSGSTRTPAGVMITYKNILANFQQMISAYFADTGAVPPLDLFIMSWLPFYHDMGLVLGVCAPIIVGCGAVLTSPVAFLQRPARWLQLMAREGQAFSAAPNFAFELTAAKAIDDDLAGLDLGRIKTILCGSERVHPATLKRFVDRFSRFNLREFAIRPAYGLAEATVYVATSQAGQPPEIRYFEPHELSAGQAKPCATGAGTALVSYPLPQSPIVRIVDPNTNTECPPGTIGEIWVHGDNVAGGYWEKPDETERTFGGALVAPSAGTPVGPWLRTGDSGFVSEDKFFIIGRIKDLLIVYGRNHSPDDIEATIQEITRGRCAAIAVPSNGVEKLVAIVELNNRGNLDTERLSFVTREVTSAISTSHGLSVSDLVLVAPGSIPITTSGKVRRAECVKLYRHNEFTRLDAKPLQASDL</sequence>
<feature type="chain" id="PRO_0000406794" description="Long-chain-fatty-acid--AMP ligase FadD23">
    <location>
        <begin position="1"/>
        <end position="584"/>
    </location>
</feature>
<feature type="transmembrane region" description="Helical" evidence="2">
    <location>
        <begin position="199"/>
        <end position="219"/>
    </location>
</feature>
<feature type="transmembrane region" description="Helical" evidence="2">
    <location>
        <begin position="225"/>
        <end position="245"/>
    </location>
</feature>
<proteinExistence type="inferred from homology"/>
<comment type="function">
    <text evidence="1">Catalyzes the activation of long-chain fatty acids as acyl-adenylates (acyl-AMP), which are then transferred to the multifunctional polyketide synthase (PKS) type III for further chain extension. Involved in the biosynthesis of sulfolipid 1 (SL-1).</text>
</comment>
<comment type="catalytic activity">
    <reaction evidence="1">
        <text>holo-[(hydroxy)phthioceranic acid synthase] + hexadecanoate + ATP = hexadecanoyl-[(hydroxy)phthioceranic acid synthase] + AMP + diphosphate</text>
        <dbReference type="Rhea" id="RHEA:59164"/>
        <dbReference type="Rhea" id="RHEA-COMP:15244"/>
        <dbReference type="Rhea" id="RHEA-COMP:15305"/>
        <dbReference type="ChEBI" id="CHEBI:7896"/>
        <dbReference type="ChEBI" id="CHEBI:30616"/>
        <dbReference type="ChEBI" id="CHEBI:33019"/>
        <dbReference type="ChEBI" id="CHEBI:64479"/>
        <dbReference type="ChEBI" id="CHEBI:78483"/>
        <dbReference type="ChEBI" id="CHEBI:456215"/>
        <dbReference type="EC" id="6.2.1.57"/>
    </reaction>
</comment>
<comment type="catalytic activity">
    <reaction evidence="1">
        <text>holo-[(hydroxy)phthioceranic acid synthase] + octadecanoate + ATP = octadecanoyl-[(hydroxy)phthioceranic acid synthase] + AMP + diphosphate</text>
        <dbReference type="Rhea" id="RHEA:59168"/>
        <dbReference type="Rhea" id="RHEA-COMP:15305"/>
        <dbReference type="Rhea" id="RHEA-COMP:15306"/>
        <dbReference type="ChEBI" id="CHEBI:25629"/>
        <dbReference type="ChEBI" id="CHEBI:30616"/>
        <dbReference type="ChEBI" id="CHEBI:33019"/>
        <dbReference type="ChEBI" id="CHEBI:64479"/>
        <dbReference type="ChEBI" id="CHEBI:78495"/>
        <dbReference type="ChEBI" id="CHEBI:456215"/>
        <dbReference type="EC" id="6.2.1.57"/>
    </reaction>
</comment>
<comment type="pathway">
    <text evidence="1">Lipid metabolism; fatty acid biosynthesis.</text>
</comment>
<comment type="subcellular location">
    <subcellularLocation>
        <location evidence="2">Membrane</location>
        <topology evidence="2">Multi-pass membrane protein</topology>
    </subcellularLocation>
</comment>
<comment type="similarity">
    <text evidence="3">Belongs to the ATP-dependent AMP-binding enzyme family.</text>
</comment>
<protein>
    <recommendedName>
        <fullName evidence="1">Long-chain-fatty-acid--AMP ligase FadD23</fullName>
        <ecNumber evidence="1">6.2.1.57</ecNumber>
    </recommendedName>
    <alternativeName>
        <fullName evidence="1">Long-chain fatty acid adenylyltransferase FadD23</fullName>
    </alternativeName>
    <alternativeName>
        <fullName evidence="1">Long-chain-fatty-acid adenylase/transferase FadD23</fullName>
    </alternativeName>
</protein>
<name>FAA23_MYCBO</name>
<reference key="1">
    <citation type="journal article" date="2003" name="Proc. Natl. Acad. Sci. U.S.A.">
        <title>The complete genome sequence of Mycobacterium bovis.</title>
        <authorList>
            <person name="Garnier T."/>
            <person name="Eiglmeier K."/>
            <person name="Camus J.-C."/>
            <person name="Medina N."/>
            <person name="Mansoor H."/>
            <person name="Pryor M."/>
            <person name="Duthoy S."/>
            <person name="Grondin S."/>
            <person name="Lacroix C."/>
            <person name="Monsempe C."/>
            <person name="Simon S."/>
            <person name="Harris B."/>
            <person name="Atkin R."/>
            <person name="Doggett J."/>
            <person name="Mayes R."/>
            <person name="Keating L."/>
            <person name="Wheeler P.R."/>
            <person name="Parkhill J."/>
            <person name="Barrell B.G."/>
            <person name="Cole S.T."/>
            <person name="Gordon S.V."/>
            <person name="Hewinson R.G."/>
        </authorList>
    </citation>
    <scope>NUCLEOTIDE SEQUENCE [LARGE SCALE GENOMIC DNA]</scope>
    <source>
        <strain>ATCC BAA-935 / AF2122/97</strain>
    </source>
</reference>
<reference key="2">
    <citation type="journal article" date="2017" name="Genome Announc.">
        <title>Updated reference genome sequence and annotation of Mycobacterium bovis AF2122/97.</title>
        <authorList>
            <person name="Malone K.M."/>
            <person name="Farrell D."/>
            <person name="Stuber T.P."/>
            <person name="Schubert O.T."/>
            <person name="Aebersold R."/>
            <person name="Robbe-Austerman S."/>
            <person name="Gordon S.V."/>
        </authorList>
    </citation>
    <scope>NUCLEOTIDE SEQUENCE [LARGE SCALE GENOMIC DNA]</scope>
    <scope>GENOME REANNOTATION</scope>
    <source>
        <strain>ATCC BAA-935 / AF2122/97</strain>
    </source>
</reference>
<organism>
    <name type="scientific">Mycobacterium bovis (strain ATCC BAA-935 / AF2122/97)</name>
    <dbReference type="NCBI Taxonomy" id="233413"/>
    <lineage>
        <taxon>Bacteria</taxon>
        <taxon>Bacillati</taxon>
        <taxon>Actinomycetota</taxon>
        <taxon>Actinomycetes</taxon>
        <taxon>Mycobacteriales</taxon>
        <taxon>Mycobacteriaceae</taxon>
        <taxon>Mycobacterium</taxon>
        <taxon>Mycobacterium tuberculosis complex</taxon>
    </lineage>
</organism>
<gene>
    <name type="primary">fadD23</name>
    <name type="ordered locus">BQ2027_MB3856</name>
</gene>
<keyword id="KW-0067">ATP-binding</keyword>
<keyword id="KW-0276">Fatty acid metabolism</keyword>
<keyword id="KW-0436">Ligase</keyword>
<keyword id="KW-0443">Lipid metabolism</keyword>
<keyword id="KW-0472">Membrane</keyword>
<keyword id="KW-0547">Nucleotide-binding</keyword>
<keyword id="KW-1185">Reference proteome</keyword>
<keyword id="KW-0812">Transmembrane</keyword>
<keyword id="KW-1133">Transmembrane helix</keyword>
<accession>Q7TVK7</accession>
<accession>A0A1R3Y6U7</accession>
<accession>X2BPQ7</accession>